<organism>
    <name type="scientific">Plasmodium yoelii yoelii</name>
    <dbReference type="NCBI Taxonomy" id="73239"/>
    <lineage>
        <taxon>Eukaryota</taxon>
        <taxon>Sar</taxon>
        <taxon>Alveolata</taxon>
        <taxon>Apicomplexa</taxon>
        <taxon>Aconoidasida</taxon>
        <taxon>Haemosporida</taxon>
        <taxon>Plasmodiidae</taxon>
        <taxon>Plasmodium</taxon>
        <taxon>Plasmodium (Vinckeia)</taxon>
    </lineage>
</organism>
<comment type="function">
    <text evidence="1">Catalytic subunit of the tRNA-splicing ligase complex that acts by directly joining spliced tRNA halves to mature-sized tRNAs by incorporating the precursor-derived splice junction phosphate into the mature tRNA as a canonical 3',5'-phosphodiester. May act as an RNA ligase with broad substrate specificity, and may function toward other RNAs.</text>
</comment>
<comment type="catalytic activity">
    <reaction evidence="1">
        <text>a 3'-end 3'-phospho-ribonucleotide-RNA + a 5'-end dephospho-ribonucleoside-RNA + GTP = a ribonucleotidyl-ribonucleotide-RNA + GMP + diphosphate</text>
        <dbReference type="Rhea" id="RHEA:68076"/>
        <dbReference type="Rhea" id="RHEA-COMP:10463"/>
        <dbReference type="Rhea" id="RHEA-COMP:13936"/>
        <dbReference type="Rhea" id="RHEA-COMP:17355"/>
        <dbReference type="ChEBI" id="CHEBI:33019"/>
        <dbReference type="ChEBI" id="CHEBI:37565"/>
        <dbReference type="ChEBI" id="CHEBI:58115"/>
        <dbReference type="ChEBI" id="CHEBI:83062"/>
        <dbReference type="ChEBI" id="CHEBI:138284"/>
        <dbReference type="ChEBI" id="CHEBI:173118"/>
        <dbReference type="EC" id="6.5.1.8"/>
    </reaction>
</comment>
<comment type="catalytic activity">
    <reaction evidence="1">
        <text>a 3'-end 2',3'-cyclophospho-ribonucleotide-RNA + a 5'-end dephospho-ribonucleoside-RNA + GTP + H2O = a ribonucleotidyl-ribonucleotide-RNA + GMP + diphosphate + H(+)</text>
        <dbReference type="Rhea" id="RHEA:68080"/>
        <dbReference type="Rhea" id="RHEA-COMP:10464"/>
        <dbReference type="Rhea" id="RHEA-COMP:13936"/>
        <dbReference type="Rhea" id="RHEA-COMP:17355"/>
        <dbReference type="ChEBI" id="CHEBI:15377"/>
        <dbReference type="ChEBI" id="CHEBI:15378"/>
        <dbReference type="ChEBI" id="CHEBI:33019"/>
        <dbReference type="ChEBI" id="CHEBI:37565"/>
        <dbReference type="ChEBI" id="CHEBI:58115"/>
        <dbReference type="ChEBI" id="CHEBI:83064"/>
        <dbReference type="ChEBI" id="CHEBI:138284"/>
        <dbReference type="ChEBI" id="CHEBI:173118"/>
        <dbReference type="EC" id="6.5.1.8"/>
    </reaction>
</comment>
<comment type="cofactor">
    <cofactor evidence="1">
        <name>Mn(2+)</name>
        <dbReference type="ChEBI" id="CHEBI:29035"/>
    </cofactor>
    <text evidence="1">Binds 2 manganese ions per subunit.</text>
</comment>
<comment type="subunit">
    <text evidence="1">Catalytic component of the tRNA-splicing ligase complex.</text>
</comment>
<comment type="miscellaneous">
    <text evidence="1">Ligation probably proceeds through 3 nucleotidyl transfer steps, with 2',3'-cyclic phosphate termini being hydrolyzed to 3'-P termini in a step that precedes 3'-P activation with GMP. In the first nucleotidyl transfer step, RTCB reacts with GTP to form a covalent RTCB-histidine-GMP intermediate with release of PPi; in the second step, the GMP moiety is transferred to the RNA 3'-P; in the third step, the 5'-OH from the opposite RNA strand attacks the activated 3'-P to form a 3',5'-phosphodiester bond and release GMP.</text>
</comment>
<comment type="similarity">
    <text evidence="1">Belongs to the RtcB family.</text>
</comment>
<protein>
    <recommendedName>
        <fullName evidence="1">RNA-splicing ligase RtcB homolog</fullName>
        <ecNumber evidence="1">6.5.1.8</ecNumber>
    </recommendedName>
    <alternativeName>
        <fullName evidence="1">3'-phosphate/5'-hydroxy nucleic acid ligase</fullName>
    </alternativeName>
</protein>
<evidence type="ECO:0000255" key="1">
    <source>
        <dbReference type="HAMAP-Rule" id="MF_03144"/>
    </source>
</evidence>
<keyword id="KW-0342">GTP-binding</keyword>
<keyword id="KW-0436">Ligase</keyword>
<keyword id="KW-0464">Manganese</keyword>
<keyword id="KW-0479">Metal-binding</keyword>
<keyword id="KW-0547">Nucleotide-binding</keyword>
<keyword id="KW-1185">Reference proteome</keyword>
<keyword id="KW-0819">tRNA processing</keyword>
<reference key="1">
    <citation type="journal article" date="2002" name="Nature">
        <title>Genome sequence and comparative analysis of the model rodent malaria parasite Plasmodium yoelii yoelii.</title>
        <authorList>
            <person name="Carlton J.M."/>
            <person name="Angiuoli S.V."/>
            <person name="Suh B.B."/>
            <person name="Kooij T.W."/>
            <person name="Pertea M."/>
            <person name="Silva J.C."/>
            <person name="Ermolaeva M.D."/>
            <person name="Allen J.E."/>
            <person name="Selengut J.D."/>
            <person name="Koo H.L."/>
            <person name="Peterson J.D."/>
            <person name="Pop M."/>
            <person name="Kosack D.S."/>
            <person name="Shumway M.F."/>
            <person name="Bidwell S.L."/>
            <person name="Shallom S.J."/>
            <person name="van Aken S.E."/>
            <person name="Riedmuller S.B."/>
            <person name="Feldblyum T.V."/>
            <person name="Cho J.K."/>
            <person name="Quackenbush J."/>
            <person name="Sedegah M."/>
            <person name="Shoaibi A."/>
            <person name="Cummings L.M."/>
            <person name="Florens L."/>
            <person name="Yates J.R. III"/>
            <person name="Raine J.D."/>
            <person name="Sinden R.E."/>
            <person name="Harris M.A."/>
            <person name="Cunningham D.A."/>
            <person name="Preiser P.R."/>
            <person name="Bergman L.W."/>
            <person name="Vaidya A.B."/>
            <person name="van Lin L.H."/>
            <person name="Janse C.J."/>
            <person name="Waters A.P."/>
            <person name="Smith H.O."/>
            <person name="White O.R."/>
            <person name="Salzberg S.L."/>
            <person name="Venter J.C."/>
            <person name="Fraser C.M."/>
            <person name="Hoffman S.L."/>
            <person name="Gardner M.J."/>
            <person name="Carucci D.J."/>
        </authorList>
    </citation>
    <scope>NUCLEOTIDE SEQUENCE [LARGE SCALE GENOMIC DNA]</scope>
    <source>
        <strain>17XNL</strain>
    </source>
</reference>
<name>RTCB_PLAYO</name>
<feature type="chain" id="PRO_0000407241" description="RNA-splicing ligase RtcB homolog">
    <location>
        <begin position="1"/>
        <end position="507"/>
    </location>
</feature>
<feature type="active site" description="GMP-histidine intermediate" evidence="1">
    <location>
        <position position="430"/>
    </location>
</feature>
<feature type="binding site" evidence="1">
    <location>
        <position position="121"/>
    </location>
    <ligand>
        <name>Mn(2+)</name>
        <dbReference type="ChEBI" id="CHEBI:29035"/>
        <label>1</label>
    </ligand>
</feature>
<feature type="binding site" evidence="1">
    <location>
        <position position="124"/>
    </location>
    <ligand>
        <name>Mn(2+)</name>
        <dbReference type="ChEBI" id="CHEBI:29035"/>
        <label>1</label>
    </ligand>
</feature>
<feature type="binding site" evidence="1">
    <location>
        <position position="124"/>
    </location>
    <ligand>
        <name>Mn(2+)</name>
        <dbReference type="ChEBI" id="CHEBI:29035"/>
        <label>2</label>
    </ligand>
</feature>
<feature type="binding site" evidence="1">
    <location>
        <begin position="228"/>
        <end position="232"/>
    </location>
    <ligand>
        <name>GMP</name>
        <dbReference type="ChEBI" id="CHEBI:58115"/>
    </ligand>
</feature>
<feature type="binding site" evidence="1">
    <location>
        <position position="229"/>
    </location>
    <ligand>
        <name>Mn(2+)</name>
        <dbReference type="ChEBI" id="CHEBI:29035"/>
        <label>1</label>
    </ligand>
</feature>
<feature type="binding site" evidence="1">
    <location>
        <position position="261"/>
    </location>
    <ligand>
        <name>Mn(2+)</name>
        <dbReference type="ChEBI" id="CHEBI:29035"/>
        <label>2</label>
    </ligand>
</feature>
<feature type="binding site" evidence="1">
    <location>
        <begin position="355"/>
        <end position="356"/>
    </location>
    <ligand>
        <name>GMP</name>
        <dbReference type="ChEBI" id="CHEBI:58115"/>
    </ligand>
</feature>
<feature type="binding site" evidence="1">
    <location>
        <position position="355"/>
    </location>
    <ligand>
        <name>Mn(2+)</name>
        <dbReference type="ChEBI" id="CHEBI:29035"/>
        <label>2</label>
    </ligand>
</feature>
<feature type="binding site" evidence="1">
    <location>
        <begin position="404"/>
        <end position="407"/>
    </location>
    <ligand>
        <name>GMP</name>
        <dbReference type="ChEBI" id="CHEBI:58115"/>
    </ligand>
</feature>
<feature type="binding site" evidence="1">
    <location>
        <position position="411"/>
    </location>
    <ligand>
        <name>GMP</name>
        <dbReference type="ChEBI" id="CHEBI:58115"/>
    </ligand>
</feature>
<feature type="binding site" evidence="1">
    <location>
        <begin position="430"/>
        <end position="433"/>
    </location>
    <ligand>
        <name>GMP</name>
        <dbReference type="ChEBI" id="CHEBI:58115"/>
    </ligand>
</feature>
<feature type="binding site" evidence="1">
    <location>
        <position position="506"/>
    </location>
    <ligand>
        <name>GMP</name>
        <dbReference type="ChEBI" id="CHEBI:58115"/>
    </ligand>
</feature>
<dbReference type="EC" id="6.5.1.8" evidence="1"/>
<dbReference type="EMBL" id="AABL01001111">
    <property type="protein sequence ID" value="EAA15543.1"/>
    <property type="molecule type" value="Genomic_DNA"/>
</dbReference>
<dbReference type="SMR" id="Q7RI54"/>
<dbReference type="FunCoup" id="Q7RI54">
    <property type="interactions" value="243"/>
</dbReference>
<dbReference type="STRING" id="73239.Q7RI54"/>
<dbReference type="PaxDb" id="73239-Q7RI54"/>
<dbReference type="EnsemblProtists" id="EAA15543">
    <property type="protein sequence ID" value="EAA15543"/>
    <property type="gene ID" value="EAA15543"/>
</dbReference>
<dbReference type="KEGG" id="pyo:PY17X_0943700"/>
<dbReference type="VEuPathDB" id="PlasmoDB:Py17XNL_000900445"/>
<dbReference type="InParanoid" id="Q7RI54"/>
<dbReference type="Proteomes" id="UP000008553">
    <property type="component" value="Unassembled WGS sequence"/>
</dbReference>
<dbReference type="GO" id="GO:0005634">
    <property type="term" value="C:nucleus"/>
    <property type="evidence" value="ECO:0007669"/>
    <property type="project" value="TreeGrafter"/>
</dbReference>
<dbReference type="GO" id="GO:0072669">
    <property type="term" value="C:tRNA-splicing ligase complex"/>
    <property type="evidence" value="ECO:0007669"/>
    <property type="project" value="UniProtKB-UniRule"/>
</dbReference>
<dbReference type="GO" id="GO:0005525">
    <property type="term" value="F:GTP binding"/>
    <property type="evidence" value="ECO:0007669"/>
    <property type="project" value="UniProtKB-KW"/>
</dbReference>
<dbReference type="GO" id="GO:0046872">
    <property type="term" value="F:metal ion binding"/>
    <property type="evidence" value="ECO:0007669"/>
    <property type="project" value="UniProtKB-KW"/>
</dbReference>
<dbReference type="GO" id="GO:0003972">
    <property type="term" value="F:RNA ligase (ATP) activity"/>
    <property type="evidence" value="ECO:0007669"/>
    <property type="project" value="TreeGrafter"/>
</dbReference>
<dbReference type="GO" id="GO:0170057">
    <property type="term" value="F:RNA ligase (GTP) activity"/>
    <property type="evidence" value="ECO:0007669"/>
    <property type="project" value="UniProtKB-EC"/>
</dbReference>
<dbReference type="GO" id="GO:0006388">
    <property type="term" value="P:tRNA splicing, via endonucleolytic cleavage and ligation"/>
    <property type="evidence" value="ECO:0007669"/>
    <property type="project" value="UniProtKB-UniRule"/>
</dbReference>
<dbReference type="FunFam" id="3.90.1860.10:FF:000001">
    <property type="entry name" value="tRNA-splicing ligase RtcB homolog"/>
    <property type="match status" value="1"/>
</dbReference>
<dbReference type="Gene3D" id="3.90.1860.10">
    <property type="entry name" value="tRNA-splicing ligase RtcB"/>
    <property type="match status" value="1"/>
</dbReference>
<dbReference type="HAMAP" id="MF_03144">
    <property type="entry name" value="RtcB_euk"/>
    <property type="match status" value="1"/>
</dbReference>
<dbReference type="InterPro" id="IPR001233">
    <property type="entry name" value="RtcB"/>
</dbReference>
<dbReference type="InterPro" id="IPR036025">
    <property type="entry name" value="RtcB-like_sf"/>
</dbReference>
<dbReference type="InterPro" id="IPR027513">
    <property type="entry name" value="RtcB_euk"/>
</dbReference>
<dbReference type="PANTHER" id="PTHR11118">
    <property type="entry name" value="RNA-SPLICING LIGASE RTCB HOMOLOG"/>
    <property type="match status" value="1"/>
</dbReference>
<dbReference type="PANTHER" id="PTHR11118:SF1">
    <property type="entry name" value="RNA-SPLICING LIGASE RTCB HOMOLOG"/>
    <property type="match status" value="1"/>
</dbReference>
<dbReference type="Pfam" id="PF01139">
    <property type="entry name" value="RtcB"/>
    <property type="match status" value="1"/>
</dbReference>
<dbReference type="SUPFAM" id="SSF103365">
    <property type="entry name" value="Hypothetical protein PH1602"/>
    <property type="match status" value="1"/>
</dbReference>
<gene>
    <name type="ORF">PY03776</name>
</gene>
<accession>Q7RI54</accession>
<proteinExistence type="inferred from homology"/>
<sequence length="507" mass="56240">MMKHGKGEDVFKYIEKTNEKNLYRINKGLVPGMNVEGNMYVNEKLKLLIDEEIKMYQLNKSSTFLPAVIQIANVSTLPGIVKASIALPDVHAGYGFSIGNVAAFDMNNEKAVISPGGVGFDINCGVRLIRTNLFYNDIKDKQEELAQLLFNHIPVGVGSQGFILCNQNNLDDALSLGMDWSVKEGYSWIEDKLNCEDNGRSLYANSDYVSVRAKKRGITQMGTLGAGNHYAEIQIVDEIYDKKSAKLMGIEKKNQVCIMIHSGSRGLGHQIATDALIEMEKVMSKYKINVIDKQLACTPIHSPEGQNYLKAMGAACNFAWINRSSMTFLARQAFSKVFNQSPDDLDMHVIYDVSHNIAKIEEHFINGKVQNLLVHRKGSTRAFPPFHPLVPLDYQYCGQPILIGGTMGTYSYVLTGTEKAMENTFGSTCHGAGRALSRNKSRNSLSYSDVLSNLKEKNISIRVASPKLIMEEAPESYKNVSEVVQTCHDSGISNKAFRLRPVAVIKG</sequence>